<dbReference type="EMBL" id="AE016795">
    <property type="protein sequence ID" value="AAO08881.1"/>
    <property type="molecule type" value="Genomic_DNA"/>
</dbReference>
<dbReference type="RefSeq" id="WP_011078452.1">
    <property type="nucleotide sequence ID" value="NC_004459.3"/>
</dbReference>
<dbReference type="SMR" id="Q8DF67"/>
<dbReference type="KEGG" id="vvu:VV1_0354"/>
<dbReference type="HOGENOM" id="CLU_017633_0_7_6"/>
<dbReference type="Proteomes" id="UP000002275">
    <property type="component" value="Chromosome 1"/>
</dbReference>
<dbReference type="GO" id="GO:0005737">
    <property type="term" value="C:cytoplasm"/>
    <property type="evidence" value="ECO:0007669"/>
    <property type="project" value="UniProtKB-SubCell"/>
</dbReference>
<dbReference type="GO" id="GO:0005524">
    <property type="term" value="F:ATP binding"/>
    <property type="evidence" value="ECO:0007669"/>
    <property type="project" value="InterPro"/>
</dbReference>
<dbReference type="GO" id="GO:0031072">
    <property type="term" value="F:heat shock protein binding"/>
    <property type="evidence" value="ECO:0007669"/>
    <property type="project" value="InterPro"/>
</dbReference>
<dbReference type="GO" id="GO:0051082">
    <property type="term" value="F:unfolded protein binding"/>
    <property type="evidence" value="ECO:0007669"/>
    <property type="project" value="UniProtKB-UniRule"/>
</dbReference>
<dbReference type="GO" id="GO:0008270">
    <property type="term" value="F:zinc ion binding"/>
    <property type="evidence" value="ECO:0007669"/>
    <property type="project" value="UniProtKB-UniRule"/>
</dbReference>
<dbReference type="GO" id="GO:0051085">
    <property type="term" value="P:chaperone cofactor-dependent protein refolding"/>
    <property type="evidence" value="ECO:0007669"/>
    <property type="project" value="TreeGrafter"/>
</dbReference>
<dbReference type="GO" id="GO:0006260">
    <property type="term" value="P:DNA replication"/>
    <property type="evidence" value="ECO:0007669"/>
    <property type="project" value="UniProtKB-KW"/>
</dbReference>
<dbReference type="GO" id="GO:0042026">
    <property type="term" value="P:protein refolding"/>
    <property type="evidence" value="ECO:0007669"/>
    <property type="project" value="TreeGrafter"/>
</dbReference>
<dbReference type="GO" id="GO:0009408">
    <property type="term" value="P:response to heat"/>
    <property type="evidence" value="ECO:0007669"/>
    <property type="project" value="InterPro"/>
</dbReference>
<dbReference type="CDD" id="cd06257">
    <property type="entry name" value="DnaJ"/>
    <property type="match status" value="1"/>
</dbReference>
<dbReference type="CDD" id="cd10747">
    <property type="entry name" value="DnaJ_C"/>
    <property type="match status" value="1"/>
</dbReference>
<dbReference type="CDD" id="cd10719">
    <property type="entry name" value="DnaJ_zf"/>
    <property type="match status" value="1"/>
</dbReference>
<dbReference type="FunFam" id="1.10.287.110:FF:000003">
    <property type="entry name" value="Molecular chaperone DnaJ"/>
    <property type="match status" value="1"/>
</dbReference>
<dbReference type="FunFam" id="2.10.230.10:FF:000002">
    <property type="entry name" value="Molecular chaperone DnaJ"/>
    <property type="match status" value="1"/>
</dbReference>
<dbReference type="FunFam" id="2.60.260.20:FF:000004">
    <property type="entry name" value="Molecular chaperone DnaJ"/>
    <property type="match status" value="1"/>
</dbReference>
<dbReference type="Gene3D" id="1.10.287.110">
    <property type="entry name" value="DnaJ domain"/>
    <property type="match status" value="1"/>
</dbReference>
<dbReference type="Gene3D" id="2.10.230.10">
    <property type="entry name" value="Heat shock protein DnaJ, cysteine-rich domain"/>
    <property type="match status" value="1"/>
</dbReference>
<dbReference type="Gene3D" id="2.60.260.20">
    <property type="entry name" value="Urease metallochaperone UreE, N-terminal domain"/>
    <property type="match status" value="2"/>
</dbReference>
<dbReference type="HAMAP" id="MF_01152">
    <property type="entry name" value="DnaJ"/>
    <property type="match status" value="1"/>
</dbReference>
<dbReference type="InterPro" id="IPR012724">
    <property type="entry name" value="DnaJ"/>
</dbReference>
<dbReference type="InterPro" id="IPR002939">
    <property type="entry name" value="DnaJ_C"/>
</dbReference>
<dbReference type="InterPro" id="IPR001623">
    <property type="entry name" value="DnaJ_domain"/>
</dbReference>
<dbReference type="InterPro" id="IPR018253">
    <property type="entry name" value="DnaJ_domain_CS"/>
</dbReference>
<dbReference type="InterPro" id="IPR008971">
    <property type="entry name" value="HSP40/DnaJ_pept-bd"/>
</dbReference>
<dbReference type="InterPro" id="IPR001305">
    <property type="entry name" value="HSP_DnaJ_Cys-rich_dom"/>
</dbReference>
<dbReference type="InterPro" id="IPR036410">
    <property type="entry name" value="HSP_DnaJ_Cys-rich_dom_sf"/>
</dbReference>
<dbReference type="InterPro" id="IPR036869">
    <property type="entry name" value="J_dom_sf"/>
</dbReference>
<dbReference type="NCBIfam" id="TIGR02349">
    <property type="entry name" value="DnaJ_bact"/>
    <property type="match status" value="1"/>
</dbReference>
<dbReference type="NCBIfam" id="NF008035">
    <property type="entry name" value="PRK10767.1"/>
    <property type="match status" value="1"/>
</dbReference>
<dbReference type="PANTHER" id="PTHR43096:SF48">
    <property type="entry name" value="CHAPERONE PROTEIN DNAJ"/>
    <property type="match status" value="1"/>
</dbReference>
<dbReference type="PANTHER" id="PTHR43096">
    <property type="entry name" value="DNAJ HOMOLOG 1, MITOCHONDRIAL-RELATED"/>
    <property type="match status" value="1"/>
</dbReference>
<dbReference type="Pfam" id="PF00226">
    <property type="entry name" value="DnaJ"/>
    <property type="match status" value="1"/>
</dbReference>
<dbReference type="Pfam" id="PF01556">
    <property type="entry name" value="DnaJ_C"/>
    <property type="match status" value="1"/>
</dbReference>
<dbReference type="Pfam" id="PF00684">
    <property type="entry name" value="DnaJ_CXXCXGXG"/>
    <property type="match status" value="1"/>
</dbReference>
<dbReference type="PRINTS" id="PR00625">
    <property type="entry name" value="JDOMAIN"/>
</dbReference>
<dbReference type="SMART" id="SM00271">
    <property type="entry name" value="DnaJ"/>
    <property type="match status" value="1"/>
</dbReference>
<dbReference type="SUPFAM" id="SSF46565">
    <property type="entry name" value="Chaperone J-domain"/>
    <property type="match status" value="1"/>
</dbReference>
<dbReference type="SUPFAM" id="SSF57938">
    <property type="entry name" value="DnaJ/Hsp40 cysteine-rich domain"/>
    <property type="match status" value="1"/>
</dbReference>
<dbReference type="SUPFAM" id="SSF49493">
    <property type="entry name" value="HSP40/DnaJ peptide-binding domain"/>
    <property type="match status" value="2"/>
</dbReference>
<dbReference type="PROSITE" id="PS00636">
    <property type="entry name" value="DNAJ_1"/>
    <property type="match status" value="1"/>
</dbReference>
<dbReference type="PROSITE" id="PS50076">
    <property type="entry name" value="DNAJ_2"/>
    <property type="match status" value="1"/>
</dbReference>
<dbReference type="PROSITE" id="PS51188">
    <property type="entry name" value="ZF_CR"/>
    <property type="match status" value="1"/>
</dbReference>
<protein>
    <recommendedName>
        <fullName evidence="1">Chaperone protein DnaJ</fullName>
    </recommendedName>
</protein>
<gene>
    <name evidence="1" type="primary">dnaJ</name>
    <name type="ordered locus">VV1_0354</name>
</gene>
<sequence length="381" mass="41226">MSKRDFYEVLGVSRDASERDIKKAYKRLAMKFHPDRNQGDESAADKFKEVKEAYEILTDPQKKAAYDQYGHAAFEQGGGGFGGGFGGGGADFGDIFGDVFGDIFGGGRRGGGHARPQRGADLRYNMELSLEEAVRGVSKEIEVPTLVHCDTCEGTGAKKGTSAETCGTCHGHGQVQMRQGFFAVQQTCPTCHGKGKIIKDPCNVCHGQGRKQKTKTLNVKIPAGVDTGDRIRLSGEGEAGERGAPAGDLYVQVHVREHHIFEREGNNLYCEVPVSFAMAALGGEVEVPTLDGRVNLKVPSETQTGRMFRMRGKGVKGVRGGAIGDLIVKLVVETPVNLSSRQKELLKEFEESCCGEAATKHKPKSEGFFNGVKKFFDDLTS</sequence>
<feature type="chain" id="PRO_0000070931" description="Chaperone protein DnaJ">
    <location>
        <begin position="1"/>
        <end position="381"/>
    </location>
</feature>
<feature type="domain" description="J" evidence="1">
    <location>
        <begin position="5"/>
        <end position="70"/>
    </location>
</feature>
<feature type="repeat" description="CXXCXGXG motif">
    <location>
        <begin position="149"/>
        <end position="156"/>
    </location>
</feature>
<feature type="repeat" description="CXXCXGXG motif">
    <location>
        <begin position="166"/>
        <end position="173"/>
    </location>
</feature>
<feature type="repeat" description="CXXCXGXG motif">
    <location>
        <begin position="188"/>
        <end position="195"/>
    </location>
</feature>
<feature type="repeat" description="CXXCXGXG motif">
    <location>
        <begin position="202"/>
        <end position="209"/>
    </location>
</feature>
<feature type="zinc finger region" description="CR-type" evidence="1">
    <location>
        <begin position="136"/>
        <end position="214"/>
    </location>
</feature>
<feature type="binding site" evidence="1">
    <location>
        <position position="149"/>
    </location>
    <ligand>
        <name>Zn(2+)</name>
        <dbReference type="ChEBI" id="CHEBI:29105"/>
        <label>1</label>
    </ligand>
</feature>
<feature type="binding site" evidence="1">
    <location>
        <position position="152"/>
    </location>
    <ligand>
        <name>Zn(2+)</name>
        <dbReference type="ChEBI" id="CHEBI:29105"/>
        <label>1</label>
    </ligand>
</feature>
<feature type="binding site" evidence="1">
    <location>
        <position position="166"/>
    </location>
    <ligand>
        <name>Zn(2+)</name>
        <dbReference type="ChEBI" id="CHEBI:29105"/>
        <label>2</label>
    </ligand>
</feature>
<feature type="binding site" evidence="1">
    <location>
        <position position="169"/>
    </location>
    <ligand>
        <name>Zn(2+)</name>
        <dbReference type="ChEBI" id="CHEBI:29105"/>
        <label>2</label>
    </ligand>
</feature>
<feature type="binding site" evidence="1">
    <location>
        <position position="188"/>
    </location>
    <ligand>
        <name>Zn(2+)</name>
        <dbReference type="ChEBI" id="CHEBI:29105"/>
        <label>2</label>
    </ligand>
</feature>
<feature type="binding site" evidence="1">
    <location>
        <position position="191"/>
    </location>
    <ligand>
        <name>Zn(2+)</name>
        <dbReference type="ChEBI" id="CHEBI:29105"/>
        <label>2</label>
    </ligand>
</feature>
<feature type="binding site" evidence="1">
    <location>
        <position position="202"/>
    </location>
    <ligand>
        <name>Zn(2+)</name>
        <dbReference type="ChEBI" id="CHEBI:29105"/>
        <label>1</label>
    </ligand>
</feature>
<feature type="binding site" evidence="1">
    <location>
        <position position="205"/>
    </location>
    <ligand>
        <name>Zn(2+)</name>
        <dbReference type="ChEBI" id="CHEBI:29105"/>
        <label>1</label>
    </ligand>
</feature>
<comment type="function">
    <text evidence="1">Participates actively in the response to hyperosmotic and heat shock by preventing the aggregation of stress-denatured proteins and by disaggregating proteins, also in an autonomous, DnaK-independent fashion. Unfolded proteins bind initially to DnaJ; upon interaction with the DnaJ-bound protein, DnaK hydrolyzes its bound ATP, resulting in the formation of a stable complex. GrpE releases ADP from DnaK; ATP binding to DnaK triggers the release of the substrate protein, thus completing the reaction cycle. Several rounds of ATP-dependent interactions between DnaJ, DnaK and GrpE are required for fully efficient folding. Also involved, together with DnaK and GrpE, in the DNA replication of plasmids through activation of initiation proteins.</text>
</comment>
<comment type="cofactor">
    <cofactor evidence="1">
        <name>Zn(2+)</name>
        <dbReference type="ChEBI" id="CHEBI:29105"/>
    </cofactor>
    <text evidence="1">Binds 2 Zn(2+) ions per monomer.</text>
</comment>
<comment type="subunit">
    <text evidence="1">Homodimer.</text>
</comment>
<comment type="subcellular location">
    <subcellularLocation>
        <location evidence="1">Cytoplasm</location>
    </subcellularLocation>
</comment>
<comment type="domain">
    <text evidence="1">The J domain is necessary and sufficient to stimulate DnaK ATPase activity. Zinc center 1 plays an important role in the autonomous, DnaK-independent chaperone activity of DnaJ. Zinc center 2 is essential for interaction with DnaK and for DnaJ activity.</text>
</comment>
<comment type="similarity">
    <text evidence="1">Belongs to the DnaJ family.</text>
</comment>
<proteinExistence type="inferred from homology"/>
<accession>Q8DF67</accession>
<name>DNAJ_VIBVU</name>
<evidence type="ECO:0000255" key="1">
    <source>
        <dbReference type="HAMAP-Rule" id="MF_01152"/>
    </source>
</evidence>
<keyword id="KW-0143">Chaperone</keyword>
<keyword id="KW-0963">Cytoplasm</keyword>
<keyword id="KW-0235">DNA replication</keyword>
<keyword id="KW-0479">Metal-binding</keyword>
<keyword id="KW-0677">Repeat</keyword>
<keyword id="KW-0346">Stress response</keyword>
<keyword id="KW-0862">Zinc</keyword>
<keyword id="KW-0863">Zinc-finger</keyword>
<reference key="1">
    <citation type="submission" date="2002-12" db="EMBL/GenBank/DDBJ databases">
        <title>Complete genome sequence of Vibrio vulnificus CMCP6.</title>
        <authorList>
            <person name="Rhee J.H."/>
            <person name="Kim S.Y."/>
            <person name="Chung S.S."/>
            <person name="Kim J.J."/>
            <person name="Moon Y.H."/>
            <person name="Jeong H."/>
            <person name="Choy H.E."/>
        </authorList>
    </citation>
    <scope>NUCLEOTIDE SEQUENCE [LARGE SCALE GENOMIC DNA]</scope>
    <source>
        <strain>CMCP6</strain>
    </source>
</reference>
<organism>
    <name type="scientific">Vibrio vulnificus (strain CMCP6)</name>
    <dbReference type="NCBI Taxonomy" id="216895"/>
    <lineage>
        <taxon>Bacteria</taxon>
        <taxon>Pseudomonadati</taxon>
        <taxon>Pseudomonadota</taxon>
        <taxon>Gammaproteobacteria</taxon>
        <taxon>Vibrionales</taxon>
        <taxon>Vibrionaceae</taxon>
        <taxon>Vibrio</taxon>
    </lineage>
</organism>